<proteinExistence type="evidence at protein level"/>
<organism>
    <name type="scientific">Homo sapiens</name>
    <name type="common">Human</name>
    <dbReference type="NCBI Taxonomy" id="9606"/>
    <lineage>
        <taxon>Eukaryota</taxon>
        <taxon>Metazoa</taxon>
        <taxon>Chordata</taxon>
        <taxon>Craniata</taxon>
        <taxon>Vertebrata</taxon>
        <taxon>Euteleostomi</taxon>
        <taxon>Mammalia</taxon>
        <taxon>Eutheria</taxon>
        <taxon>Euarchontoglires</taxon>
        <taxon>Primates</taxon>
        <taxon>Haplorrhini</taxon>
        <taxon>Catarrhini</taxon>
        <taxon>Hominidae</taxon>
        <taxon>Homo</taxon>
    </lineage>
</organism>
<feature type="chain" id="PRO_0000328995" description="Cilia- and flagella-associated protein HOATZ">
    <location>
        <begin position="1"/>
        <end position="169"/>
    </location>
</feature>
<feature type="region of interest" description="Disordered" evidence="2">
    <location>
        <begin position="1"/>
        <end position="21"/>
    </location>
</feature>
<feature type="region of interest" description="Disordered" evidence="2">
    <location>
        <begin position="52"/>
        <end position="89"/>
    </location>
</feature>
<feature type="region of interest" description="Disordered" evidence="2">
    <location>
        <begin position="144"/>
        <end position="169"/>
    </location>
</feature>
<feature type="compositionally biased region" description="Polar residues" evidence="2">
    <location>
        <begin position="75"/>
        <end position="89"/>
    </location>
</feature>
<feature type="splice variant" id="VSP_032883" description="In isoform 2 and isoform 3." evidence="3">
    <original>K</original>
    <variation>KTRSHSVTQNEVQWHDHGSLQPQLSRIQ</variation>
    <location>
        <position position="113"/>
    </location>
</feature>
<feature type="splice variant" id="VSP_032884" description="In isoform 2." evidence="3">
    <original>KKVVSESDKEDQEEVKTLD</original>
    <variation>E</variation>
    <location>
        <begin position="151"/>
        <end position="169"/>
    </location>
</feature>
<keyword id="KW-0025">Alternative splicing</keyword>
<keyword id="KW-0966">Cell projection</keyword>
<keyword id="KW-0963">Cytoplasm</keyword>
<keyword id="KW-1267">Proteomics identification</keyword>
<keyword id="KW-1185">Reference proteome</keyword>
<name>HOATZ_HUMAN</name>
<sequence length="169" mass="19340">METGPSEEPSGRKESQEMCPPGLLVFAGSSEQDANLAKQFWISASMYPPSESQLVLRRDSSQRLPVARPRRSRGSENSHSSQSFHLASNKNRDIFAEALKIQESEEKVKYLQKAKTREEILQLLRKQREERISKELISLPYKPKAKEHKAKKVVSESDKEDQEEVKTLD</sequence>
<reference key="1">
    <citation type="journal article" date="2004" name="Nat. Genet.">
        <title>Complete sequencing and characterization of 21,243 full-length human cDNAs.</title>
        <authorList>
            <person name="Ota T."/>
            <person name="Suzuki Y."/>
            <person name="Nishikawa T."/>
            <person name="Otsuki T."/>
            <person name="Sugiyama T."/>
            <person name="Irie R."/>
            <person name="Wakamatsu A."/>
            <person name="Hayashi K."/>
            <person name="Sato H."/>
            <person name="Nagai K."/>
            <person name="Kimura K."/>
            <person name="Makita H."/>
            <person name="Sekine M."/>
            <person name="Obayashi M."/>
            <person name="Nishi T."/>
            <person name="Shibahara T."/>
            <person name="Tanaka T."/>
            <person name="Ishii S."/>
            <person name="Yamamoto J."/>
            <person name="Saito K."/>
            <person name="Kawai Y."/>
            <person name="Isono Y."/>
            <person name="Nakamura Y."/>
            <person name="Nagahari K."/>
            <person name="Murakami K."/>
            <person name="Yasuda T."/>
            <person name="Iwayanagi T."/>
            <person name="Wagatsuma M."/>
            <person name="Shiratori A."/>
            <person name="Sudo H."/>
            <person name="Hosoiri T."/>
            <person name="Kaku Y."/>
            <person name="Kodaira H."/>
            <person name="Kondo H."/>
            <person name="Sugawara M."/>
            <person name="Takahashi M."/>
            <person name="Kanda K."/>
            <person name="Yokoi T."/>
            <person name="Furuya T."/>
            <person name="Kikkawa E."/>
            <person name="Omura Y."/>
            <person name="Abe K."/>
            <person name="Kamihara K."/>
            <person name="Katsuta N."/>
            <person name="Sato K."/>
            <person name="Tanikawa M."/>
            <person name="Yamazaki M."/>
            <person name="Ninomiya K."/>
            <person name="Ishibashi T."/>
            <person name="Yamashita H."/>
            <person name="Murakawa K."/>
            <person name="Fujimori K."/>
            <person name="Tanai H."/>
            <person name="Kimata M."/>
            <person name="Watanabe M."/>
            <person name="Hiraoka S."/>
            <person name="Chiba Y."/>
            <person name="Ishida S."/>
            <person name="Ono Y."/>
            <person name="Takiguchi S."/>
            <person name="Watanabe S."/>
            <person name="Yosida M."/>
            <person name="Hotuta T."/>
            <person name="Kusano J."/>
            <person name="Kanehori K."/>
            <person name="Takahashi-Fujii A."/>
            <person name="Hara H."/>
            <person name="Tanase T.-O."/>
            <person name="Nomura Y."/>
            <person name="Togiya S."/>
            <person name="Komai F."/>
            <person name="Hara R."/>
            <person name="Takeuchi K."/>
            <person name="Arita M."/>
            <person name="Imose N."/>
            <person name="Musashino K."/>
            <person name="Yuuki H."/>
            <person name="Oshima A."/>
            <person name="Sasaki N."/>
            <person name="Aotsuka S."/>
            <person name="Yoshikawa Y."/>
            <person name="Matsunawa H."/>
            <person name="Ichihara T."/>
            <person name="Shiohata N."/>
            <person name="Sano S."/>
            <person name="Moriya S."/>
            <person name="Momiyama H."/>
            <person name="Satoh N."/>
            <person name="Takami S."/>
            <person name="Terashima Y."/>
            <person name="Suzuki O."/>
            <person name="Nakagawa S."/>
            <person name="Senoh A."/>
            <person name="Mizoguchi H."/>
            <person name="Goto Y."/>
            <person name="Shimizu F."/>
            <person name="Wakebe H."/>
            <person name="Hishigaki H."/>
            <person name="Watanabe T."/>
            <person name="Sugiyama A."/>
            <person name="Takemoto M."/>
            <person name="Kawakami B."/>
            <person name="Yamazaki M."/>
            <person name="Watanabe K."/>
            <person name="Kumagai A."/>
            <person name="Itakura S."/>
            <person name="Fukuzumi Y."/>
            <person name="Fujimori Y."/>
            <person name="Komiyama M."/>
            <person name="Tashiro H."/>
            <person name="Tanigami A."/>
            <person name="Fujiwara T."/>
            <person name="Ono T."/>
            <person name="Yamada K."/>
            <person name="Fujii Y."/>
            <person name="Ozaki K."/>
            <person name="Hirao M."/>
            <person name="Ohmori Y."/>
            <person name="Kawabata A."/>
            <person name="Hikiji T."/>
            <person name="Kobatake N."/>
            <person name="Inagaki H."/>
            <person name="Ikema Y."/>
            <person name="Okamoto S."/>
            <person name="Okitani R."/>
            <person name="Kawakami T."/>
            <person name="Noguchi S."/>
            <person name="Itoh T."/>
            <person name="Shigeta K."/>
            <person name="Senba T."/>
            <person name="Matsumura K."/>
            <person name="Nakajima Y."/>
            <person name="Mizuno T."/>
            <person name="Morinaga M."/>
            <person name="Sasaki M."/>
            <person name="Togashi T."/>
            <person name="Oyama M."/>
            <person name="Hata H."/>
            <person name="Watanabe M."/>
            <person name="Komatsu T."/>
            <person name="Mizushima-Sugano J."/>
            <person name="Satoh T."/>
            <person name="Shirai Y."/>
            <person name="Takahashi Y."/>
            <person name="Nakagawa K."/>
            <person name="Okumura K."/>
            <person name="Nagase T."/>
            <person name="Nomura N."/>
            <person name="Kikuchi H."/>
            <person name="Masuho Y."/>
            <person name="Yamashita R."/>
            <person name="Nakai K."/>
            <person name="Yada T."/>
            <person name="Nakamura Y."/>
            <person name="Ohara O."/>
            <person name="Isogai T."/>
            <person name="Sugano S."/>
        </authorList>
    </citation>
    <scope>NUCLEOTIDE SEQUENCE [LARGE SCALE MRNA] (ISOFORM 2)</scope>
    <source>
        <tissue>Testis</tissue>
    </source>
</reference>
<reference key="2">
    <citation type="journal article" date="2006" name="Nature">
        <title>Human chromosome 11 DNA sequence and analysis including novel gene identification.</title>
        <authorList>
            <person name="Taylor T.D."/>
            <person name="Noguchi H."/>
            <person name="Totoki Y."/>
            <person name="Toyoda A."/>
            <person name="Kuroki Y."/>
            <person name="Dewar K."/>
            <person name="Lloyd C."/>
            <person name="Itoh T."/>
            <person name="Takeda T."/>
            <person name="Kim D.-W."/>
            <person name="She X."/>
            <person name="Barlow K.F."/>
            <person name="Bloom T."/>
            <person name="Bruford E."/>
            <person name="Chang J.L."/>
            <person name="Cuomo C.A."/>
            <person name="Eichler E."/>
            <person name="FitzGerald M.G."/>
            <person name="Jaffe D.B."/>
            <person name="LaButti K."/>
            <person name="Nicol R."/>
            <person name="Park H.-S."/>
            <person name="Seaman C."/>
            <person name="Sougnez C."/>
            <person name="Yang X."/>
            <person name="Zimmer A.R."/>
            <person name="Zody M.C."/>
            <person name="Birren B.W."/>
            <person name="Nusbaum C."/>
            <person name="Fujiyama A."/>
            <person name="Hattori M."/>
            <person name="Rogers J."/>
            <person name="Lander E.S."/>
            <person name="Sakaki Y."/>
        </authorList>
    </citation>
    <scope>NUCLEOTIDE SEQUENCE [LARGE SCALE GENOMIC DNA]</scope>
</reference>
<reference key="3">
    <citation type="journal article" date="2004" name="Genome Res.">
        <title>The status, quality, and expansion of the NIH full-length cDNA project: the Mammalian Gene Collection (MGC).</title>
        <authorList>
            <consortium name="The MGC Project Team"/>
        </authorList>
    </citation>
    <scope>NUCLEOTIDE SEQUENCE [LARGE SCALE MRNA] OF 10-169 (ISOFORM 1)</scope>
    <source>
        <tissue>Duodenum</tissue>
    </source>
</reference>
<accession>Q6PI97</accession>
<accession>E9PAN0</accession>
<accession>Q6ZRL3</accession>
<comment type="function">
    <text evidence="1">Required for motile ciliogenesis and flagellar genesis by mediating the maturation of the glycolytic enzyme ENO4.</text>
</comment>
<comment type="subcellular location">
    <subcellularLocation>
        <location evidence="1">Cytoplasm</location>
    </subcellularLocation>
    <subcellularLocation>
        <location evidence="1">Cell projection</location>
        <location evidence="1">Cilium</location>
    </subcellularLocation>
</comment>
<comment type="alternative products">
    <event type="alternative splicing"/>
    <isoform>
        <id>Q6PI97-1</id>
        <name>1</name>
        <sequence type="displayed"/>
    </isoform>
    <isoform>
        <id>Q6PI97-2</id>
        <name>2</name>
        <sequence type="described" ref="VSP_032883 VSP_032884"/>
    </isoform>
    <isoform>
        <id>Q6PI97-3</id>
        <name>3</name>
        <sequence type="described" ref="VSP_032883"/>
    </isoform>
</comment>
<comment type="similarity">
    <text evidence="4">Belongs to the HOATZ family.</text>
</comment>
<comment type="sequence caution" evidence="4">
    <conflict type="erroneous initiation">
        <sequence resource="EMBL-CDS" id="AAH39505"/>
    </conflict>
    <text>Extended N-terminus.</text>
</comment>
<gene>
    <name evidence="5" type="primary">HOATZ</name>
    <name type="synonym">C11orf88</name>
    <name evidence="1" type="synonym">HOATZIN</name>
</gene>
<evidence type="ECO:0000250" key="1">
    <source>
        <dbReference type="UniProtKB" id="Q80Y73"/>
    </source>
</evidence>
<evidence type="ECO:0000256" key="2">
    <source>
        <dbReference type="SAM" id="MobiDB-lite"/>
    </source>
</evidence>
<evidence type="ECO:0000303" key="3">
    <source>
    </source>
</evidence>
<evidence type="ECO:0000305" key="4"/>
<evidence type="ECO:0000312" key="5">
    <source>
        <dbReference type="HGNC" id="HGNC:25061"/>
    </source>
</evidence>
<dbReference type="EMBL" id="AK128145">
    <property type="protein sequence ID" value="BAC87297.1"/>
    <property type="molecule type" value="mRNA"/>
</dbReference>
<dbReference type="EMBL" id="AP002008">
    <property type="status" value="NOT_ANNOTATED_CDS"/>
    <property type="molecule type" value="Genomic_DNA"/>
</dbReference>
<dbReference type="EMBL" id="BC039505">
    <property type="protein sequence ID" value="AAH39505.1"/>
    <property type="status" value="ALT_INIT"/>
    <property type="molecule type" value="mRNA"/>
</dbReference>
<dbReference type="CCDS" id="CCDS41712.1">
    <molecule id="Q6PI97-3"/>
</dbReference>
<dbReference type="CCDS" id="CCDS41713.1">
    <molecule id="Q6PI97-1"/>
</dbReference>
<dbReference type="RefSeq" id="NP_001093858.1">
    <molecule id="Q6PI97-1"/>
    <property type="nucleotide sequence ID" value="NM_001100388.2"/>
</dbReference>
<dbReference type="RefSeq" id="NP_997313.2">
    <molecule id="Q6PI97-3"/>
    <property type="nucleotide sequence ID" value="NM_207430.2"/>
</dbReference>
<dbReference type="SMR" id="Q6PI97"/>
<dbReference type="FunCoup" id="Q6PI97">
    <property type="interactions" value="32"/>
</dbReference>
<dbReference type="STRING" id="9606.ENSP00000333845"/>
<dbReference type="iPTMnet" id="Q6PI97"/>
<dbReference type="PhosphoSitePlus" id="Q6PI97"/>
<dbReference type="BioMuta" id="C11orf88"/>
<dbReference type="DMDM" id="182705208"/>
<dbReference type="MassIVE" id="Q6PI97"/>
<dbReference type="PeptideAtlas" id="Q6PI97"/>
<dbReference type="ProteomicsDB" id="19051"/>
<dbReference type="ProteomicsDB" id="67145">
    <molecule id="Q6PI97-1"/>
</dbReference>
<dbReference type="ProteomicsDB" id="67146">
    <molecule id="Q6PI97-2"/>
</dbReference>
<dbReference type="Antibodypedia" id="62221">
    <property type="antibodies" value="2 antibodies from 2 providers"/>
</dbReference>
<dbReference type="DNASU" id="399949"/>
<dbReference type="Ensembl" id="ENST00000332814.6">
    <molecule id="Q6PI97-3"/>
    <property type="protein sequence ID" value="ENSP00000333845.6"/>
    <property type="gene ID" value="ENSG00000183644.14"/>
</dbReference>
<dbReference type="Ensembl" id="ENST00000375618.9">
    <molecule id="Q6PI97-1"/>
    <property type="protein sequence ID" value="ENSP00000364768.4"/>
    <property type="gene ID" value="ENSG00000183644.14"/>
</dbReference>
<dbReference type="GeneID" id="399949"/>
<dbReference type="KEGG" id="hsa:399949"/>
<dbReference type="MANE-Select" id="ENST00000375618.9">
    <property type="protein sequence ID" value="ENSP00000364768.4"/>
    <property type="RefSeq nucleotide sequence ID" value="NM_001100388.2"/>
    <property type="RefSeq protein sequence ID" value="NP_001093858.1"/>
</dbReference>
<dbReference type="UCSC" id="uc001pln.5">
    <molecule id="Q6PI97-1"/>
    <property type="organism name" value="human"/>
</dbReference>
<dbReference type="AGR" id="HGNC:25061"/>
<dbReference type="CTD" id="399949"/>
<dbReference type="DisGeNET" id="399949"/>
<dbReference type="GeneCards" id="HOATZ"/>
<dbReference type="HGNC" id="HGNC:25061">
    <property type="gene designation" value="HOATZ"/>
</dbReference>
<dbReference type="HPA" id="ENSG00000183644">
    <property type="expression patterns" value="Group enriched (choroid plexus, fallopian tube)"/>
</dbReference>
<dbReference type="neXtProt" id="NX_Q6PI97"/>
<dbReference type="OpenTargets" id="ENSG00000183644"/>
<dbReference type="VEuPathDB" id="HostDB:ENSG00000183644"/>
<dbReference type="GeneTree" id="ENSGT00390000002677"/>
<dbReference type="HOGENOM" id="CLU_122904_0_0_1"/>
<dbReference type="InParanoid" id="Q6PI97"/>
<dbReference type="OMA" id="TVCSERQ"/>
<dbReference type="OrthoDB" id="10004365at2759"/>
<dbReference type="PAN-GO" id="Q6PI97">
    <property type="GO annotations" value="0 GO annotations based on evolutionary models"/>
</dbReference>
<dbReference type="PhylomeDB" id="Q6PI97"/>
<dbReference type="TreeFam" id="TF328616"/>
<dbReference type="PathwayCommons" id="Q6PI97"/>
<dbReference type="BioGRID-ORCS" id="399949">
    <property type="hits" value="18 hits in 1109 CRISPR screens"/>
</dbReference>
<dbReference type="ChiTaRS" id="C11orf88">
    <property type="organism name" value="human"/>
</dbReference>
<dbReference type="GenomeRNAi" id="399949"/>
<dbReference type="Pharos" id="Q6PI97">
    <property type="development level" value="Tdark"/>
</dbReference>
<dbReference type="PRO" id="PR:Q6PI97"/>
<dbReference type="Proteomes" id="UP000005640">
    <property type="component" value="Chromosome 11"/>
</dbReference>
<dbReference type="RNAct" id="Q6PI97">
    <property type="molecule type" value="protein"/>
</dbReference>
<dbReference type="Bgee" id="ENSG00000183644">
    <property type="expression patterns" value="Expressed in right uterine tube and 97 other cell types or tissues"/>
</dbReference>
<dbReference type="ExpressionAtlas" id="Q6PI97">
    <property type="expression patterns" value="baseline and differential"/>
</dbReference>
<dbReference type="GO" id="GO:0005929">
    <property type="term" value="C:cilium"/>
    <property type="evidence" value="ECO:0000250"/>
    <property type="project" value="UniProtKB"/>
</dbReference>
<dbReference type="GO" id="GO:0005737">
    <property type="term" value="C:cytoplasm"/>
    <property type="evidence" value="ECO:0000250"/>
    <property type="project" value="UniProtKB"/>
</dbReference>
<dbReference type="GO" id="GO:0035082">
    <property type="term" value="P:axoneme assembly"/>
    <property type="evidence" value="ECO:0000250"/>
    <property type="project" value="UniProtKB"/>
</dbReference>
<dbReference type="GO" id="GO:0060271">
    <property type="term" value="P:cilium assembly"/>
    <property type="evidence" value="ECO:0000250"/>
    <property type="project" value="UniProtKB"/>
</dbReference>
<dbReference type="GO" id="GO:0030317">
    <property type="term" value="P:flagellated sperm motility"/>
    <property type="evidence" value="ECO:0000250"/>
    <property type="project" value="UniProtKB"/>
</dbReference>
<dbReference type="GO" id="GO:0007283">
    <property type="term" value="P:spermatogenesis"/>
    <property type="evidence" value="ECO:0000250"/>
    <property type="project" value="UniProtKB"/>
</dbReference>
<dbReference type="InterPro" id="IPR040681">
    <property type="entry name" value="HOATZ-like"/>
</dbReference>
<dbReference type="PANTHER" id="PTHR47231:SF1">
    <property type="entry name" value="CILIA- AND FLAGELLA-ASSOCIATED PROTEIN HOATZ"/>
    <property type="match status" value="1"/>
</dbReference>
<dbReference type="PANTHER" id="PTHR47231">
    <property type="entry name" value="UPF0722 PROTEIN C11ORF88"/>
    <property type="match status" value="1"/>
</dbReference>
<dbReference type="Pfam" id="PF17664">
    <property type="entry name" value="HOATZ-like"/>
    <property type="match status" value="1"/>
</dbReference>
<protein>
    <recommendedName>
        <fullName evidence="5">Cilia- and flagella-associated protein HOATZ</fullName>
    </recommendedName>
</protein>